<feature type="chain" id="PRO_1000191526" description="Tetraacyldisaccharide 4'-kinase">
    <location>
        <begin position="1"/>
        <end position="361"/>
    </location>
</feature>
<feature type="binding site" evidence="1">
    <location>
        <begin position="49"/>
        <end position="56"/>
    </location>
    <ligand>
        <name>ATP</name>
        <dbReference type="ChEBI" id="CHEBI:30616"/>
    </ligand>
</feature>
<gene>
    <name evidence="1" type="primary">lpxK</name>
    <name type="ordered locus">Cpar_0513</name>
</gene>
<comment type="function">
    <text evidence="1">Transfers the gamma-phosphate of ATP to the 4'-position of a tetraacyldisaccharide 1-phosphate intermediate (termed DS-1-P) to form tetraacyldisaccharide 1,4'-bis-phosphate (lipid IVA).</text>
</comment>
<comment type="catalytic activity">
    <reaction evidence="1">
        <text>a lipid A disaccharide + ATP = a lipid IVA + ADP + H(+)</text>
        <dbReference type="Rhea" id="RHEA:67840"/>
        <dbReference type="ChEBI" id="CHEBI:15378"/>
        <dbReference type="ChEBI" id="CHEBI:30616"/>
        <dbReference type="ChEBI" id="CHEBI:176343"/>
        <dbReference type="ChEBI" id="CHEBI:176425"/>
        <dbReference type="ChEBI" id="CHEBI:456216"/>
        <dbReference type="EC" id="2.7.1.130"/>
    </reaction>
</comment>
<comment type="pathway">
    <text evidence="1">Glycolipid biosynthesis; lipid IV(A) biosynthesis; lipid IV(A) from (3R)-3-hydroxytetradecanoyl-[acyl-carrier-protein] and UDP-N-acetyl-alpha-D-glucosamine: step 6/6.</text>
</comment>
<comment type="similarity">
    <text evidence="1">Belongs to the LpxK family.</text>
</comment>
<sequence>MSSRSASFLLRPAAALYGVVMSLRNHLYDRGAFKSWRSPIPVVSVGNITTGGTGKTPLVDWIVKFYEASGIPTAIVSRGYGRQTKGVQLVSDGKRILLGSRDAGDETAMLASRNPGTIVVVAEERVEGVQFLMREFADRLPGVIVLDDAFQHRKIARDLDIVVVNAGTPQELDAMLPAGRLREPLPGLSRADLIILSKITDDAKAAPLLQKLRETGKPVLRSKIKPGKLVKVDGSENGATEPAVKALAFAGIGAPEGFLHSLEKAGITVKATKFFRDHEPYTEAAIRSIIEESKRQEFVPVTTEKDWFRIADNPQLTEMLAQAGCRYLTIAPEFLDGTEELEKRLLSVLETKVVNWPLSPP</sequence>
<proteinExistence type="inferred from homology"/>
<keyword id="KW-0067">ATP-binding</keyword>
<keyword id="KW-0418">Kinase</keyword>
<keyword id="KW-0441">Lipid A biosynthesis</keyword>
<keyword id="KW-0444">Lipid biosynthesis</keyword>
<keyword id="KW-0443">Lipid metabolism</keyword>
<keyword id="KW-0547">Nucleotide-binding</keyword>
<keyword id="KW-0808">Transferase</keyword>
<accession>B3QLP5</accession>
<protein>
    <recommendedName>
        <fullName evidence="1">Tetraacyldisaccharide 4'-kinase</fullName>
        <ecNumber evidence="1">2.7.1.130</ecNumber>
    </recommendedName>
    <alternativeName>
        <fullName evidence="1">Lipid A 4'-kinase</fullName>
    </alternativeName>
</protein>
<reference key="1">
    <citation type="submission" date="2008-06" db="EMBL/GenBank/DDBJ databases">
        <title>Complete sequence of Chlorobaculum parvum NCIB 8327.</title>
        <authorList>
            <consortium name="US DOE Joint Genome Institute"/>
            <person name="Lucas S."/>
            <person name="Copeland A."/>
            <person name="Lapidus A."/>
            <person name="Glavina del Rio T."/>
            <person name="Dalin E."/>
            <person name="Tice H."/>
            <person name="Bruce D."/>
            <person name="Goodwin L."/>
            <person name="Pitluck S."/>
            <person name="Schmutz J."/>
            <person name="Larimer F."/>
            <person name="Land M."/>
            <person name="Hauser L."/>
            <person name="Kyrpides N."/>
            <person name="Mikhailova N."/>
            <person name="Zhao F."/>
            <person name="Li T."/>
            <person name="Liu Z."/>
            <person name="Overmann J."/>
            <person name="Bryant D.A."/>
            <person name="Richardson P."/>
        </authorList>
    </citation>
    <scope>NUCLEOTIDE SEQUENCE [LARGE SCALE GENOMIC DNA]</scope>
    <source>
        <strain>DSM 263 / NCIMB 8327</strain>
    </source>
</reference>
<dbReference type="EC" id="2.7.1.130" evidence="1"/>
<dbReference type="EMBL" id="CP001099">
    <property type="protein sequence ID" value="ACF10935.1"/>
    <property type="molecule type" value="Genomic_DNA"/>
</dbReference>
<dbReference type="RefSeq" id="WP_012501768.1">
    <property type="nucleotide sequence ID" value="NC_011027.1"/>
</dbReference>
<dbReference type="SMR" id="B3QLP5"/>
<dbReference type="STRING" id="517417.Cpar_0513"/>
<dbReference type="KEGG" id="cpc:Cpar_0513"/>
<dbReference type="eggNOG" id="COG1663">
    <property type="taxonomic scope" value="Bacteria"/>
</dbReference>
<dbReference type="HOGENOM" id="CLU_038816_6_0_10"/>
<dbReference type="OrthoDB" id="9766423at2"/>
<dbReference type="UniPathway" id="UPA00359">
    <property type="reaction ID" value="UER00482"/>
</dbReference>
<dbReference type="Proteomes" id="UP000008811">
    <property type="component" value="Chromosome"/>
</dbReference>
<dbReference type="GO" id="GO:0005886">
    <property type="term" value="C:plasma membrane"/>
    <property type="evidence" value="ECO:0007669"/>
    <property type="project" value="TreeGrafter"/>
</dbReference>
<dbReference type="GO" id="GO:0005524">
    <property type="term" value="F:ATP binding"/>
    <property type="evidence" value="ECO:0007669"/>
    <property type="project" value="UniProtKB-UniRule"/>
</dbReference>
<dbReference type="GO" id="GO:0009029">
    <property type="term" value="F:tetraacyldisaccharide 4'-kinase activity"/>
    <property type="evidence" value="ECO:0007669"/>
    <property type="project" value="UniProtKB-UniRule"/>
</dbReference>
<dbReference type="GO" id="GO:0009245">
    <property type="term" value="P:lipid A biosynthetic process"/>
    <property type="evidence" value="ECO:0007669"/>
    <property type="project" value="UniProtKB-UniRule"/>
</dbReference>
<dbReference type="GO" id="GO:0009244">
    <property type="term" value="P:lipopolysaccharide core region biosynthetic process"/>
    <property type="evidence" value="ECO:0007669"/>
    <property type="project" value="TreeGrafter"/>
</dbReference>
<dbReference type="HAMAP" id="MF_00409">
    <property type="entry name" value="LpxK"/>
    <property type="match status" value="1"/>
</dbReference>
<dbReference type="InterPro" id="IPR003758">
    <property type="entry name" value="LpxK"/>
</dbReference>
<dbReference type="InterPro" id="IPR027417">
    <property type="entry name" value="P-loop_NTPase"/>
</dbReference>
<dbReference type="NCBIfam" id="TIGR00682">
    <property type="entry name" value="lpxK"/>
    <property type="match status" value="1"/>
</dbReference>
<dbReference type="PANTHER" id="PTHR42724">
    <property type="entry name" value="TETRAACYLDISACCHARIDE 4'-KINASE"/>
    <property type="match status" value="1"/>
</dbReference>
<dbReference type="PANTHER" id="PTHR42724:SF1">
    <property type="entry name" value="TETRAACYLDISACCHARIDE 4'-KINASE, MITOCHONDRIAL-RELATED"/>
    <property type="match status" value="1"/>
</dbReference>
<dbReference type="Pfam" id="PF02606">
    <property type="entry name" value="LpxK"/>
    <property type="match status" value="1"/>
</dbReference>
<dbReference type="SUPFAM" id="SSF52540">
    <property type="entry name" value="P-loop containing nucleoside triphosphate hydrolases"/>
    <property type="match status" value="1"/>
</dbReference>
<name>LPXK_CHLP8</name>
<organism>
    <name type="scientific">Chlorobaculum parvum (strain DSM 263 / NCIMB 8327)</name>
    <name type="common">Chlorobium vibrioforme subsp. thiosulfatophilum</name>
    <dbReference type="NCBI Taxonomy" id="517417"/>
    <lineage>
        <taxon>Bacteria</taxon>
        <taxon>Pseudomonadati</taxon>
        <taxon>Chlorobiota</taxon>
        <taxon>Chlorobiia</taxon>
        <taxon>Chlorobiales</taxon>
        <taxon>Chlorobiaceae</taxon>
        <taxon>Chlorobaculum</taxon>
    </lineage>
</organism>
<evidence type="ECO:0000255" key="1">
    <source>
        <dbReference type="HAMAP-Rule" id="MF_00409"/>
    </source>
</evidence>